<accession>Q54TL0</accession>
<accession>Q94463</accession>
<feature type="chain" id="PRO_0000365582" description="Kinesin-related protein 7">
    <location>
        <begin position="1"/>
        <end position="1255"/>
    </location>
</feature>
<feature type="transmembrane region" description="Helical" evidence="1">
    <location>
        <begin position="945"/>
        <end position="965"/>
    </location>
</feature>
<feature type="domain" description="Kinesin motor" evidence="2">
    <location>
        <begin position="28"/>
        <end position="349"/>
    </location>
</feature>
<feature type="region of interest" description="Disordered" evidence="3">
    <location>
        <begin position="1"/>
        <end position="26"/>
    </location>
</feature>
<feature type="region of interest" description="Disordered" evidence="3">
    <location>
        <begin position="454"/>
        <end position="503"/>
    </location>
</feature>
<feature type="region of interest" description="Disordered" evidence="3">
    <location>
        <begin position="530"/>
        <end position="564"/>
    </location>
</feature>
<feature type="region of interest" description="Disordered" evidence="3">
    <location>
        <begin position="579"/>
        <end position="628"/>
    </location>
</feature>
<feature type="region of interest" description="Disordered" evidence="3">
    <location>
        <begin position="661"/>
        <end position="686"/>
    </location>
</feature>
<feature type="region of interest" description="Disordered" evidence="3">
    <location>
        <begin position="795"/>
        <end position="864"/>
    </location>
</feature>
<feature type="region of interest" description="Disordered" evidence="3">
    <location>
        <begin position="915"/>
        <end position="934"/>
    </location>
</feature>
<feature type="coiled-coil region" evidence="1">
    <location>
        <begin position="1088"/>
        <end position="1223"/>
    </location>
</feature>
<feature type="compositionally biased region" description="Low complexity" evidence="3">
    <location>
        <begin position="454"/>
        <end position="491"/>
    </location>
</feature>
<feature type="compositionally biased region" description="Low complexity" evidence="3">
    <location>
        <begin position="545"/>
        <end position="563"/>
    </location>
</feature>
<feature type="compositionally biased region" description="Low complexity" evidence="3">
    <location>
        <begin position="583"/>
        <end position="603"/>
    </location>
</feature>
<feature type="compositionally biased region" description="Polar residues" evidence="3">
    <location>
        <begin position="608"/>
        <end position="628"/>
    </location>
</feature>
<feature type="compositionally biased region" description="Acidic residues" evidence="3">
    <location>
        <begin position="813"/>
        <end position="834"/>
    </location>
</feature>
<feature type="compositionally biased region" description="Low complexity" evidence="3">
    <location>
        <begin position="915"/>
        <end position="932"/>
    </location>
</feature>
<feature type="binding site" evidence="2">
    <location>
        <begin position="107"/>
        <end position="114"/>
    </location>
    <ligand>
        <name>ATP</name>
        <dbReference type="ChEBI" id="CHEBI:30616"/>
    </ligand>
</feature>
<feature type="sequence conflict" description="In Ref. 1; AAB07748." evidence="5" ref="1">
    <original>D</original>
    <variation>I</variation>
    <location>
        <position position="171"/>
    </location>
</feature>
<feature type="sequence conflict" description="In Ref. 1; AAB07748." evidence="5" ref="1">
    <original>ERA</original>
    <variation>DIS</variation>
    <location>
        <begin position="260"/>
        <end position="262"/>
    </location>
</feature>
<feature type="sequence conflict" description="In Ref. 1; AAB07748." evidence="5" ref="1">
    <original>A</original>
    <variation>V</variation>
    <location>
        <position position="296"/>
    </location>
</feature>
<feature type="sequence conflict" description="In Ref. 1; AAB07748." evidence="5" ref="1">
    <location>
        <position position="901"/>
    </location>
</feature>
<organism>
    <name type="scientific">Dictyostelium discoideum</name>
    <name type="common">Social amoeba</name>
    <dbReference type="NCBI Taxonomy" id="44689"/>
    <lineage>
        <taxon>Eukaryota</taxon>
        <taxon>Amoebozoa</taxon>
        <taxon>Evosea</taxon>
        <taxon>Eumycetozoa</taxon>
        <taxon>Dictyostelia</taxon>
        <taxon>Dictyosteliales</taxon>
        <taxon>Dictyosteliaceae</taxon>
        <taxon>Dictyostelium</taxon>
    </lineage>
</organism>
<evidence type="ECO:0000255" key="1"/>
<evidence type="ECO:0000255" key="2">
    <source>
        <dbReference type="PROSITE-ProRule" id="PRU00283"/>
    </source>
</evidence>
<evidence type="ECO:0000256" key="3">
    <source>
        <dbReference type="SAM" id="MobiDB-lite"/>
    </source>
</evidence>
<evidence type="ECO:0000269" key="4">
    <source>
    </source>
</evidence>
<evidence type="ECO:0000305" key="5"/>
<evidence type="ECO:0000305" key="6">
    <source>
    </source>
</evidence>
<sequence length="1255" mass="141959">MESPVVEGNSGEVATPTLPQPPTPVSSNIRVVCRVRPLTELEKGRNEHSIVHFFDSKSISIRANGPQFTFDRIFGYQETQSQIFEDVAEPIVNDFLDGYHGTIIAYGQTASGKTFTMVGDPDSHGIIPRVIESIFVGISKMREKDTSLSLAFCLKISALELYNEKLYDLYDASKSNLNIREHKQNGIYVEGISEIVITSIEEAYNFLNISNNNRAIASTKMSAASSRSHSVLMIELSQQNLSMESSKISKLFLVDLAGSERAHKTGAEGDRMQEAKNINLSLSALGKVINALTCGANYVPYRDSKLTRVLQDSLGGNSKTSLIINCSPSNNNEHETITTLQFGTRAKTIKNQPKINKKITYHELELFIIKLAKDLEKSRKECEEITRSKNLEINNLLIQLENNQKMVVESNQKLELLNSQISSNHSFDNTFKEIENTCENSKIIFDDLNDHINNNNNVDENNNTNNNDNNNNDNNNNNQYQEESNQYQQENNQKDGDQNNSSFDSIKVEDLRDLDDEPDIEDIILNSTLGNISDDDDDDDDHHSNNNNVDDNNNGEINNDSDGYLNRSLKDIKIPEISDLNDHNINNNNNNNNNINNDNNSNSGGLRVSTSYITSSPNLSPSKSMDVNNSPPLFSYFKTKDFPPSSDENDKFFNDLIAKGENEQQQQQQQHNDDDEDIKSTTSNATTTTITTIDMNASHPSGIDDPIEFTIIKSDKTITSTIERETIQPSSLSNSTSLLDIETVESSTLPAPPPVTTTTTLTTVTTTKLTKTTNIPSNTNDINSIDDFGFSKIEEEGSSSNRKPNDTAILSFGDDDDEENEDNENEDVIVDSDEDTHSGKNNLLNTFKNDHHRGDFGATPTKSIFNKNGNITIKEFETPQQQQQQQQQQQQQQQQQQQQQQPLILQTTSTNPTIISIKSNKEPSPSSSTTTSIKKKNFNKRRSWIIFTIILTITLVSSSLLCLYLPEYKERLVQRRGYLNKLGIYSDYPTNEKISLAQHNQISLAKELYGGNSKQYYDEMSSFNTAYNHLIEMNHLETAVSKIFGSAIDLRFSGDDVINSIECKRAIHKLKTNNYVNGDLDQQQQQHNYITKIDQLSEQSKEQNQLIENFKLDLKNKTSEIEKLEKEIKQKDNKIKEKEEKIELIESRVLNEEKGGEKVLEDQIISLRNDKNTLSTQILNLEGDKKSLGVLVIKLNSDKTEIQNEVKELKRKVQELEDAPIALIPNPFVKWVKSFYVEKKSWFVENIYKIWNWFK</sequence>
<comment type="function">
    <text evidence="4">Microtubule-associated force-producing protein that plays a role in organelle transport. Its motor activity is directed toward the microtubule's plus end. May be involved in cell motility or cell differentiation during prestalk formation.</text>
</comment>
<comment type="subcellular location">
    <subcellularLocation>
        <location evidence="4">Nucleus membrane</location>
        <topology evidence="4">Single-pass membrane protein</topology>
    </subcellularLocation>
    <subcellularLocation>
        <location evidence="6">Cytoplasm</location>
        <location evidence="6">Cytoskeleton</location>
    </subcellularLocation>
</comment>
<comment type="induction">
    <text evidence="4">During the developmental stage with highest levels detectable between 12 and 16 hours of development.</text>
</comment>
<comment type="disruption phenotype">
    <text evidence="4">Kif7-null cells have a problem in the localization or differentiation of prestalk cells in a kif7-null/wild type mixed aggregate.</text>
</comment>
<comment type="similarity">
    <text evidence="2">Belongs to the TRAFAC class myosin-kinesin ATPase superfamily. Kinesin family.</text>
</comment>
<comment type="sequence caution" evidence="5">
    <conflict type="frameshift">
        <sequence resource="EMBL-CDS" id="AAB07748"/>
    </conflict>
</comment>
<keyword id="KW-0067">ATP-binding</keyword>
<keyword id="KW-0175">Coiled coil</keyword>
<keyword id="KW-0963">Cytoplasm</keyword>
<keyword id="KW-0206">Cytoskeleton</keyword>
<keyword id="KW-0472">Membrane</keyword>
<keyword id="KW-0493">Microtubule</keyword>
<keyword id="KW-0505">Motor protein</keyword>
<keyword id="KW-0547">Nucleotide-binding</keyword>
<keyword id="KW-0539">Nucleus</keyword>
<keyword id="KW-1185">Reference proteome</keyword>
<keyword id="KW-0812">Transmembrane</keyword>
<keyword id="KW-1133">Transmembrane helix</keyword>
<keyword id="KW-0813">Transport</keyword>
<reference key="1">
    <citation type="journal article" date="1998" name="Mol. Biol. Cell">
        <title>A developmentally regulated kinesin-related motor protein from Dictyostelium discoideum.</title>
        <authorList>
            <person name="de Hostos E.L."/>
            <person name="McCaffrey G."/>
            <person name="Sucgang R."/>
            <person name="Pierce D.W."/>
            <person name="Vale R.D."/>
        </authorList>
    </citation>
    <scope>NUCLEOTIDE SEQUENCE [MRNA]</scope>
    <scope>FUNCTION</scope>
    <scope>INDUCTION</scope>
    <scope>SUBCELLULAR LOCATION</scope>
    <scope>DISRUPTION PHENOTYPE</scope>
    <source>
        <strain>AX2</strain>
        <strain>AX3</strain>
    </source>
</reference>
<reference key="2">
    <citation type="journal article" date="2005" name="Nature">
        <title>The genome of the social amoeba Dictyostelium discoideum.</title>
        <authorList>
            <person name="Eichinger L."/>
            <person name="Pachebat J.A."/>
            <person name="Gloeckner G."/>
            <person name="Rajandream M.A."/>
            <person name="Sucgang R."/>
            <person name="Berriman M."/>
            <person name="Song J."/>
            <person name="Olsen R."/>
            <person name="Szafranski K."/>
            <person name="Xu Q."/>
            <person name="Tunggal B."/>
            <person name="Kummerfeld S."/>
            <person name="Madera M."/>
            <person name="Konfortov B.A."/>
            <person name="Rivero F."/>
            <person name="Bankier A.T."/>
            <person name="Lehmann R."/>
            <person name="Hamlin N."/>
            <person name="Davies R."/>
            <person name="Gaudet P."/>
            <person name="Fey P."/>
            <person name="Pilcher K."/>
            <person name="Chen G."/>
            <person name="Saunders D."/>
            <person name="Sodergren E.J."/>
            <person name="Davis P."/>
            <person name="Kerhornou A."/>
            <person name="Nie X."/>
            <person name="Hall N."/>
            <person name="Anjard C."/>
            <person name="Hemphill L."/>
            <person name="Bason N."/>
            <person name="Farbrother P."/>
            <person name="Desany B."/>
            <person name="Just E."/>
            <person name="Morio T."/>
            <person name="Rost R."/>
            <person name="Churcher C.M."/>
            <person name="Cooper J."/>
            <person name="Haydock S."/>
            <person name="van Driessche N."/>
            <person name="Cronin A."/>
            <person name="Goodhead I."/>
            <person name="Muzny D.M."/>
            <person name="Mourier T."/>
            <person name="Pain A."/>
            <person name="Lu M."/>
            <person name="Harper D."/>
            <person name="Lindsay R."/>
            <person name="Hauser H."/>
            <person name="James K.D."/>
            <person name="Quiles M."/>
            <person name="Madan Babu M."/>
            <person name="Saito T."/>
            <person name="Buchrieser C."/>
            <person name="Wardroper A."/>
            <person name="Felder M."/>
            <person name="Thangavelu M."/>
            <person name="Johnson D."/>
            <person name="Knights A."/>
            <person name="Loulseged H."/>
            <person name="Mungall K.L."/>
            <person name="Oliver K."/>
            <person name="Price C."/>
            <person name="Quail M.A."/>
            <person name="Urushihara H."/>
            <person name="Hernandez J."/>
            <person name="Rabbinowitsch E."/>
            <person name="Steffen D."/>
            <person name="Sanders M."/>
            <person name="Ma J."/>
            <person name="Kohara Y."/>
            <person name="Sharp S."/>
            <person name="Simmonds M.N."/>
            <person name="Spiegler S."/>
            <person name="Tivey A."/>
            <person name="Sugano S."/>
            <person name="White B."/>
            <person name="Walker D."/>
            <person name="Woodward J.R."/>
            <person name="Winckler T."/>
            <person name="Tanaka Y."/>
            <person name="Shaulsky G."/>
            <person name="Schleicher M."/>
            <person name="Weinstock G.M."/>
            <person name="Rosenthal A."/>
            <person name="Cox E.C."/>
            <person name="Chisholm R.L."/>
            <person name="Gibbs R.A."/>
            <person name="Loomis W.F."/>
            <person name="Platzer M."/>
            <person name="Kay R.R."/>
            <person name="Williams J.G."/>
            <person name="Dear P.H."/>
            <person name="Noegel A.A."/>
            <person name="Barrell B.G."/>
            <person name="Kuspa A."/>
        </authorList>
    </citation>
    <scope>NUCLEOTIDE SEQUENCE [LARGE SCALE GENOMIC DNA]</scope>
    <source>
        <strain>AX4</strain>
    </source>
</reference>
<reference key="3">
    <citation type="journal article" date="2003" name="BMC Genomics">
        <title>Identification and phylogenetic analysis of Dictyostelium discoideum kinesin proteins.</title>
        <authorList>
            <person name="Kollmar M."/>
            <person name="Gloeckner G."/>
        </authorList>
    </citation>
    <scope>IDENTIFICATION</scope>
    <scope>NOMENCLATURE</scope>
</reference>
<proteinExistence type="evidence at transcript level"/>
<name>KIF7_DICDI</name>
<gene>
    <name type="primary">kif7</name>
    <name type="synonym">K7</name>
    <name type="synonym">ksnG</name>
    <name type="ORF">DDB_G0281555</name>
</gene>
<protein>
    <recommendedName>
        <fullName>Kinesin-related protein 7</fullName>
    </recommendedName>
    <alternativeName>
        <fullName>Kinesin family member 7</fullName>
    </alternativeName>
    <alternativeName>
        <fullName>Kinesin-1</fullName>
    </alternativeName>
</protein>
<dbReference type="EMBL" id="U41289">
    <property type="protein sequence ID" value="AAB07748.1"/>
    <property type="status" value="ALT_FRAME"/>
    <property type="molecule type" value="mRNA"/>
</dbReference>
<dbReference type="EMBL" id="AAFI02000042">
    <property type="protein sequence ID" value="EAL66539.1"/>
    <property type="molecule type" value="Genomic_DNA"/>
</dbReference>
<dbReference type="RefSeq" id="XP_640581.1">
    <property type="nucleotide sequence ID" value="XM_635489.1"/>
</dbReference>
<dbReference type="SMR" id="Q54TL0"/>
<dbReference type="FunCoup" id="Q54TL0">
    <property type="interactions" value="682"/>
</dbReference>
<dbReference type="STRING" id="44689.Q54TL0"/>
<dbReference type="PaxDb" id="44689-DDB0206583"/>
<dbReference type="EnsemblProtists" id="EAL66539">
    <property type="protein sequence ID" value="EAL66539"/>
    <property type="gene ID" value="DDB_G0281555"/>
</dbReference>
<dbReference type="GeneID" id="8623189"/>
<dbReference type="KEGG" id="ddi:DDB_G0281555"/>
<dbReference type="dictyBase" id="DDB_G0281555">
    <property type="gene designation" value="kif7"/>
</dbReference>
<dbReference type="VEuPathDB" id="AmoebaDB:DDB_G0281555"/>
<dbReference type="eggNOG" id="KOG0240">
    <property type="taxonomic scope" value="Eukaryota"/>
</dbReference>
<dbReference type="HOGENOM" id="CLU_265425_0_0_1"/>
<dbReference type="InParanoid" id="Q54TL0"/>
<dbReference type="OMA" id="REHKQNG"/>
<dbReference type="PRO" id="PR:Q54TL0"/>
<dbReference type="Proteomes" id="UP000002195">
    <property type="component" value="Chromosome 3"/>
</dbReference>
<dbReference type="GO" id="GO:0005737">
    <property type="term" value="C:cytoplasm"/>
    <property type="evidence" value="ECO:0000318"/>
    <property type="project" value="GO_Central"/>
</dbReference>
<dbReference type="GO" id="GO:0005871">
    <property type="term" value="C:kinesin complex"/>
    <property type="evidence" value="ECO:0000318"/>
    <property type="project" value="GO_Central"/>
</dbReference>
<dbReference type="GO" id="GO:0005874">
    <property type="term" value="C:microtubule"/>
    <property type="evidence" value="ECO:0000318"/>
    <property type="project" value="GO_Central"/>
</dbReference>
<dbReference type="GO" id="GO:0031965">
    <property type="term" value="C:nuclear membrane"/>
    <property type="evidence" value="ECO:0007669"/>
    <property type="project" value="UniProtKB-SubCell"/>
</dbReference>
<dbReference type="GO" id="GO:0048471">
    <property type="term" value="C:perinuclear region of cytoplasm"/>
    <property type="evidence" value="ECO:0000314"/>
    <property type="project" value="dictyBase"/>
</dbReference>
<dbReference type="GO" id="GO:0005524">
    <property type="term" value="F:ATP binding"/>
    <property type="evidence" value="ECO:0007669"/>
    <property type="project" value="UniProtKB-KW"/>
</dbReference>
<dbReference type="GO" id="GO:0016887">
    <property type="term" value="F:ATP hydrolysis activity"/>
    <property type="evidence" value="ECO:0000318"/>
    <property type="project" value="GO_Central"/>
</dbReference>
<dbReference type="GO" id="GO:0008017">
    <property type="term" value="F:microtubule binding"/>
    <property type="evidence" value="ECO:0000318"/>
    <property type="project" value="GO_Central"/>
</dbReference>
<dbReference type="GO" id="GO:0008574">
    <property type="term" value="F:plus-end-directed microtubule motor activity"/>
    <property type="evidence" value="ECO:0000314"/>
    <property type="project" value="dictyBase"/>
</dbReference>
<dbReference type="GO" id="GO:0030705">
    <property type="term" value="P:cytoskeleton-dependent intracellular transport"/>
    <property type="evidence" value="ECO:0000318"/>
    <property type="project" value="GO_Central"/>
</dbReference>
<dbReference type="GO" id="GO:0007018">
    <property type="term" value="P:microtubule-based movement"/>
    <property type="evidence" value="ECO:0000314"/>
    <property type="project" value="dictyBase"/>
</dbReference>
<dbReference type="FunFam" id="3.40.850.10:FF:000162">
    <property type="entry name" value="Kinesin-like protein"/>
    <property type="match status" value="1"/>
</dbReference>
<dbReference type="Gene3D" id="3.40.850.10">
    <property type="entry name" value="Kinesin motor domain"/>
    <property type="match status" value="1"/>
</dbReference>
<dbReference type="InterPro" id="IPR027640">
    <property type="entry name" value="Kinesin-like_fam"/>
</dbReference>
<dbReference type="InterPro" id="IPR019821">
    <property type="entry name" value="Kinesin_motor_CS"/>
</dbReference>
<dbReference type="InterPro" id="IPR001752">
    <property type="entry name" value="Kinesin_motor_dom"/>
</dbReference>
<dbReference type="InterPro" id="IPR036961">
    <property type="entry name" value="Kinesin_motor_dom_sf"/>
</dbReference>
<dbReference type="InterPro" id="IPR027417">
    <property type="entry name" value="P-loop_NTPase"/>
</dbReference>
<dbReference type="PANTHER" id="PTHR47968">
    <property type="entry name" value="CENTROMERE PROTEIN E"/>
    <property type="match status" value="1"/>
</dbReference>
<dbReference type="PANTHER" id="PTHR47968:SF75">
    <property type="entry name" value="CENTROMERE-ASSOCIATED PROTEIN E"/>
    <property type="match status" value="1"/>
</dbReference>
<dbReference type="Pfam" id="PF00225">
    <property type="entry name" value="Kinesin"/>
    <property type="match status" value="1"/>
</dbReference>
<dbReference type="PRINTS" id="PR00380">
    <property type="entry name" value="KINESINHEAVY"/>
</dbReference>
<dbReference type="SMART" id="SM00129">
    <property type="entry name" value="KISc"/>
    <property type="match status" value="1"/>
</dbReference>
<dbReference type="SUPFAM" id="SSF81995">
    <property type="entry name" value="beta-sandwich domain of Sec23/24"/>
    <property type="match status" value="1"/>
</dbReference>
<dbReference type="SUPFAM" id="SSF52540">
    <property type="entry name" value="P-loop containing nucleoside triphosphate hydrolases"/>
    <property type="match status" value="1"/>
</dbReference>
<dbReference type="PROSITE" id="PS00411">
    <property type="entry name" value="KINESIN_MOTOR_1"/>
    <property type="match status" value="1"/>
</dbReference>
<dbReference type="PROSITE" id="PS50067">
    <property type="entry name" value="KINESIN_MOTOR_2"/>
    <property type="match status" value="1"/>
</dbReference>